<gene>
    <name evidence="1" type="primary">atpB</name>
    <name type="ordered locus">MA_4159</name>
</gene>
<organism>
    <name type="scientific">Methanosarcina acetivorans (strain ATCC 35395 / DSM 2834 / JCM 12185 / C2A)</name>
    <dbReference type="NCBI Taxonomy" id="188937"/>
    <lineage>
        <taxon>Archaea</taxon>
        <taxon>Methanobacteriati</taxon>
        <taxon>Methanobacteriota</taxon>
        <taxon>Stenosarchaea group</taxon>
        <taxon>Methanomicrobia</taxon>
        <taxon>Methanosarcinales</taxon>
        <taxon>Methanosarcinaceae</taxon>
        <taxon>Methanosarcina</taxon>
    </lineage>
</organism>
<accession>Q8TIJ0</accession>
<dbReference type="EMBL" id="AE010299">
    <property type="protein sequence ID" value="AAM07507.1"/>
    <property type="molecule type" value="Genomic_DNA"/>
</dbReference>
<dbReference type="RefSeq" id="WP_011024047.1">
    <property type="nucleotide sequence ID" value="NC_003552.1"/>
</dbReference>
<dbReference type="SMR" id="Q8TIJ0"/>
<dbReference type="FunCoup" id="Q8TIJ0">
    <property type="interactions" value="39"/>
</dbReference>
<dbReference type="STRING" id="188937.MA_4159"/>
<dbReference type="EnsemblBacteria" id="AAM07507">
    <property type="protein sequence ID" value="AAM07507"/>
    <property type="gene ID" value="MA_4159"/>
</dbReference>
<dbReference type="GeneID" id="1476053"/>
<dbReference type="KEGG" id="mac:MA_4159"/>
<dbReference type="HOGENOM" id="CLU_022916_0_0_2"/>
<dbReference type="InParanoid" id="Q8TIJ0"/>
<dbReference type="OrthoDB" id="32941at2157"/>
<dbReference type="PhylomeDB" id="Q8TIJ0"/>
<dbReference type="Proteomes" id="UP000002487">
    <property type="component" value="Chromosome"/>
</dbReference>
<dbReference type="GO" id="GO:0005886">
    <property type="term" value="C:plasma membrane"/>
    <property type="evidence" value="ECO:0007669"/>
    <property type="project" value="UniProtKB-SubCell"/>
</dbReference>
<dbReference type="GO" id="GO:0033178">
    <property type="term" value="C:proton-transporting two-sector ATPase complex, catalytic domain"/>
    <property type="evidence" value="ECO:0007669"/>
    <property type="project" value="InterPro"/>
</dbReference>
<dbReference type="GO" id="GO:0005524">
    <property type="term" value="F:ATP binding"/>
    <property type="evidence" value="ECO:0007669"/>
    <property type="project" value="UniProtKB-UniRule"/>
</dbReference>
<dbReference type="GO" id="GO:0046933">
    <property type="term" value="F:proton-transporting ATP synthase activity, rotational mechanism"/>
    <property type="evidence" value="ECO:0007669"/>
    <property type="project" value="UniProtKB-UniRule"/>
</dbReference>
<dbReference type="GO" id="GO:0042777">
    <property type="term" value="P:proton motive force-driven plasma membrane ATP synthesis"/>
    <property type="evidence" value="ECO:0007669"/>
    <property type="project" value="UniProtKB-UniRule"/>
</dbReference>
<dbReference type="CDD" id="cd18112">
    <property type="entry name" value="ATP-synt_V_A-type_beta_C"/>
    <property type="match status" value="1"/>
</dbReference>
<dbReference type="CDD" id="cd18118">
    <property type="entry name" value="ATP-synt_V_A-type_beta_N"/>
    <property type="match status" value="1"/>
</dbReference>
<dbReference type="CDD" id="cd01135">
    <property type="entry name" value="V_A-ATPase_B"/>
    <property type="match status" value="1"/>
</dbReference>
<dbReference type="Gene3D" id="3.40.50.12240">
    <property type="match status" value="1"/>
</dbReference>
<dbReference type="HAMAP" id="MF_00310">
    <property type="entry name" value="ATP_synth_B_arch"/>
    <property type="match status" value="1"/>
</dbReference>
<dbReference type="InterPro" id="IPR055190">
    <property type="entry name" value="ATP-synt_VA_C"/>
</dbReference>
<dbReference type="InterPro" id="IPR020003">
    <property type="entry name" value="ATPase_a/bsu_AS"/>
</dbReference>
<dbReference type="InterPro" id="IPR005724">
    <property type="entry name" value="ATPase_A1-cplx_bsu"/>
</dbReference>
<dbReference type="InterPro" id="IPR004100">
    <property type="entry name" value="ATPase_F1/V1/A1_a/bsu_N"/>
</dbReference>
<dbReference type="InterPro" id="IPR000194">
    <property type="entry name" value="ATPase_F1/V1/A1_a/bsu_nucl-bd"/>
</dbReference>
<dbReference type="InterPro" id="IPR027417">
    <property type="entry name" value="P-loop_NTPase"/>
</dbReference>
<dbReference type="InterPro" id="IPR022879">
    <property type="entry name" value="V-ATPase_su_B/beta"/>
</dbReference>
<dbReference type="NCBIfam" id="TIGR01041">
    <property type="entry name" value="ATP_syn_B_arch"/>
    <property type="match status" value="1"/>
</dbReference>
<dbReference type="NCBIfam" id="NF003235">
    <property type="entry name" value="PRK04196.1"/>
    <property type="match status" value="1"/>
</dbReference>
<dbReference type="PANTHER" id="PTHR43389">
    <property type="entry name" value="V-TYPE PROTON ATPASE SUBUNIT B"/>
    <property type="match status" value="1"/>
</dbReference>
<dbReference type="PANTHER" id="PTHR43389:SF4">
    <property type="entry name" value="V-TYPE PROTON ATPASE SUBUNIT B"/>
    <property type="match status" value="1"/>
</dbReference>
<dbReference type="Pfam" id="PF00006">
    <property type="entry name" value="ATP-synt_ab"/>
    <property type="match status" value="1"/>
</dbReference>
<dbReference type="Pfam" id="PF02874">
    <property type="entry name" value="ATP-synt_ab_N"/>
    <property type="match status" value="1"/>
</dbReference>
<dbReference type="Pfam" id="PF22919">
    <property type="entry name" value="ATP-synt_VA_C"/>
    <property type="match status" value="1"/>
</dbReference>
<dbReference type="PIRSF" id="PIRSF039114">
    <property type="entry name" value="V-ATPsynth_beta/V-ATPase_B"/>
    <property type="match status" value="1"/>
</dbReference>
<dbReference type="SUPFAM" id="SSF47917">
    <property type="entry name" value="C-terminal domain of alpha and beta subunits of F1 ATP synthase"/>
    <property type="match status" value="1"/>
</dbReference>
<dbReference type="SUPFAM" id="SSF52540">
    <property type="entry name" value="P-loop containing nucleoside triphosphate hydrolases"/>
    <property type="match status" value="1"/>
</dbReference>
<dbReference type="PROSITE" id="PS00152">
    <property type="entry name" value="ATPASE_ALPHA_BETA"/>
    <property type="match status" value="1"/>
</dbReference>
<evidence type="ECO:0000255" key="1">
    <source>
        <dbReference type="HAMAP-Rule" id="MF_00310"/>
    </source>
</evidence>
<sequence length="460" mass="50397">MVKEYKTITQIAGPLIFVEKTEPVGYNEIVNIKMTDGTVRRGQVLDSSSDIVVVQVFEGTGGLDKDCGVIFTGETLKLPASIDLLGRILSGSGDPRDGGPRIVPDQLLDINGAAMNPYARLPPKDFIQTGISTIDGTNTLVRGQKLPIFSASGLPHNEIALQIARQASVPGSESAFAVVFAAMGITNEEAQYFMSDFEKTGALERAVVFLNLADDPAVERIVTPRMALTAAEYLAYEHGMHVLVILTDITNYAEALRQMGAARNEVPGRRGYPGYMYTDLATLYERAGIVKGAKGSVTQIPILSMPGDDITHPIPDLSGYITEGQIVVARELHRKGIYPPINVLPSLSRLMNSGIGPGKTREDHKAVSDQMYAGYAEGRDLRGLVAIVGKEALSERDTKFLEFADLFEDKFVRQGRNENRTIEDTLEIGWQILTHLPENQLGRIDNKYIQKYHPAHRKAK</sequence>
<comment type="function">
    <text evidence="1">Component of the A-type ATP synthase that produces ATP from ADP in the presence of a proton gradient across the membrane. The B chain is a regulatory subunit.</text>
</comment>
<comment type="subunit">
    <text evidence="1">Has multiple subunits with at least A(3), B(3), C, D, E, F, H, I and proteolipid K(x).</text>
</comment>
<comment type="subcellular location">
    <subcellularLocation>
        <location evidence="1">Cell membrane</location>
        <topology evidence="1">Peripheral membrane protein</topology>
    </subcellularLocation>
</comment>
<comment type="similarity">
    <text evidence="1">Belongs to the ATPase alpha/beta chains family.</text>
</comment>
<keyword id="KW-0066">ATP synthesis</keyword>
<keyword id="KW-1003">Cell membrane</keyword>
<keyword id="KW-0375">Hydrogen ion transport</keyword>
<keyword id="KW-0406">Ion transport</keyword>
<keyword id="KW-0472">Membrane</keyword>
<keyword id="KW-1185">Reference proteome</keyword>
<keyword id="KW-0813">Transport</keyword>
<proteinExistence type="inferred from homology"/>
<protein>
    <recommendedName>
        <fullName evidence="1">A-type ATP synthase subunit B</fullName>
    </recommendedName>
</protein>
<reference key="1">
    <citation type="journal article" date="2002" name="Genome Res.">
        <title>The genome of Methanosarcina acetivorans reveals extensive metabolic and physiological diversity.</title>
        <authorList>
            <person name="Galagan J.E."/>
            <person name="Nusbaum C."/>
            <person name="Roy A."/>
            <person name="Endrizzi M.G."/>
            <person name="Macdonald P."/>
            <person name="FitzHugh W."/>
            <person name="Calvo S."/>
            <person name="Engels R."/>
            <person name="Smirnov S."/>
            <person name="Atnoor D."/>
            <person name="Brown A."/>
            <person name="Allen N."/>
            <person name="Naylor J."/>
            <person name="Stange-Thomann N."/>
            <person name="DeArellano K."/>
            <person name="Johnson R."/>
            <person name="Linton L."/>
            <person name="McEwan P."/>
            <person name="McKernan K."/>
            <person name="Talamas J."/>
            <person name="Tirrell A."/>
            <person name="Ye W."/>
            <person name="Zimmer A."/>
            <person name="Barber R.D."/>
            <person name="Cann I."/>
            <person name="Graham D.E."/>
            <person name="Grahame D.A."/>
            <person name="Guss A.M."/>
            <person name="Hedderich R."/>
            <person name="Ingram-Smith C."/>
            <person name="Kuettner H.C."/>
            <person name="Krzycki J.A."/>
            <person name="Leigh J.A."/>
            <person name="Li W."/>
            <person name="Liu J."/>
            <person name="Mukhopadhyay B."/>
            <person name="Reeve J.N."/>
            <person name="Smith K."/>
            <person name="Springer T.A."/>
            <person name="Umayam L.A."/>
            <person name="White O."/>
            <person name="White R.H."/>
            <person name="de Macario E.C."/>
            <person name="Ferry J.G."/>
            <person name="Jarrell K.F."/>
            <person name="Jing H."/>
            <person name="Macario A.J.L."/>
            <person name="Paulsen I.T."/>
            <person name="Pritchett M."/>
            <person name="Sowers K.R."/>
            <person name="Swanson R.V."/>
            <person name="Zinder S.H."/>
            <person name="Lander E."/>
            <person name="Metcalf W.W."/>
            <person name="Birren B."/>
        </authorList>
    </citation>
    <scope>NUCLEOTIDE SEQUENCE [LARGE SCALE GENOMIC DNA]</scope>
    <source>
        <strain>ATCC 35395 / DSM 2834 / JCM 12185 / C2A</strain>
    </source>
</reference>
<feature type="chain" id="PRO_0000144654" description="A-type ATP synthase subunit B">
    <location>
        <begin position="1"/>
        <end position="460"/>
    </location>
</feature>
<name>AATB_METAC</name>